<comment type="function">
    <text evidence="1">Required for the formation of a threonylcarbamoyl group on adenosine at position 37 (t(6)A37) in tRNAs that read codons beginning with adenine. Is involved in the transfer of the threonylcarbamoyl moiety of threonylcarbamoyl-AMP (TC-AMP) to the N6 group of A37, together with TsaE and TsaB. TsaD likely plays a direct catalytic role in this reaction.</text>
</comment>
<comment type="catalytic activity">
    <reaction evidence="1">
        <text>L-threonylcarbamoyladenylate + adenosine(37) in tRNA = N(6)-L-threonylcarbamoyladenosine(37) in tRNA + AMP + H(+)</text>
        <dbReference type="Rhea" id="RHEA:37059"/>
        <dbReference type="Rhea" id="RHEA-COMP:10162"/>
        <dbReference type="Rhea" id="RHEA-COMP:10163"/>
        <dbReference type="ChEBI" id="CHEBI:15378"/>
        <dbReference type="ChEBI" id="CHEBI:73682"/>
        <dbReference type="ChEBI" id="CHEBI:74411"/>
        <dbReference type="ChEBI" id="CHEBI:74418"/>
        <dbReference type="ChEBI" id="CHEBI:456215"/>
        <dbReference type="EC" id="2.3.1.234"/>
    </reaction>
</comment>
<comment type="cofactor">
    <cofactor evidence="1">
        <name>Fe(2+)</name>
        <dbReference type="ChEBI" id="CHEBI:29033"/>
    </cofactor>
    <text evidence="1">Binds 1 Fe(2+) ion per subunit.</text>
</comment>
<comment type="subcellular location">
    <subcellularLocation>
        <location evidence="1">Cytoplasm</location>
    </subcellularLocation>
</comment>
<comment type="similarity">
    <text evidence="1">Belongs to the KAE1 / TsaD family.</text>
</comment>
<dbReference type="EC" id="2.3.1.234" evidence="1"/>
<dbReference type="EMBL" id="CP001068">
    <property type="protein sequence ID" value="ACD27558.1"/>
    <property type="molecule type" value="Genomic_DNA"/>
</dbReference>
<dbReference type="SMR" id="B2U928"/>
<dbReference type="STRING" id="402626.Rpic_2424"/>
<dbReference type="KEGG" id="rpi:Rpic_2424"/>
<dbReference type="eggNOG" id="COG0533">
    <property type="taxonomic scope" value="Bacteria"/>
</dbReference>
<dbReference type="HOGENOM" id="CLU_023208_0_2_4"/>
<dbReference type="GO" id="GO:0005737">
    <property type="term" value="C:cytoplasm"/>
    <property type="evidence" value="ECO:0007669"/>
    <property type="project" value="UniProtKB-SubCell"/>
</dbReference>
<dbReference type="GO" id="GO:0005506">
    <property type="term" value="F:iron ion binding"/>
    <property type="evidence" value="ECO:0007669"/>
    <property type="project" value="UniProtKB-UniRule"/>
</dbReference>
<dbReference type="GO" id="GO:0061711">
    <property type="term" value="F:N(6)-L-threonylcarbamoyladenine synthase activity"/>
    <property type="evidence" value="ECO:0007669"/>
    <property type="project" value="UniProtKB-EC"/>
</dbReference>
<dbReference type="GO" id="GO:0002949">
    <property type="term" value="P:tRNA threonylcarbamoyladenosine modification"/>
    <property type="evidence" value="ECO:0007669"/>
    <property type="project" value="UniProtKB-UniRule"/>
</dbReference>
<dbReference type="CDD" id="cd24133">
    <property type="entry name" value="ASKHA_NBD_TsaD_bac"/>
    <property type="match status" value="1"/>
</dbReference>
<dbReference type="FunFam" id="3.30.420.40:FF:000012">
    <property type="entry name" value="tRNA N6-adenosine threonylcarbamoyltransferase"/>
    <property type="match status" value="1"/>
</dbReference>
<dbReference type="FunFam" id="3.30.420.40:FF:000040">
    <property type="entry name" value="tRNA N6-adenosine threonylcarbamoyltransferase"/>
    <property type="match status" value="1"/>
</dbReference>
<dbReference type="Gene3D" id="3.30.420.40">
    <property type="match status" value="2"/>
</dbReference>
<dbReference type="HAMAP" id="MF_01445">
    <property type="entry name" value="TsaD"/>
    <property type="match status" value="1"/>
</dbReference>
<dbReference type="InterPro" id="IPR043129">
    <property type="entry name" value="ATPase_NBD"/>
</dbReference>
<dbReference type="InterPro" id="IPR000905">
    <property type="entry name" value="Gcp-like_dom"/>
</dbReference>
<dbReference type="InterPro" id="IPR017861">
    <property type="entry name" value="KAE1/TsaD"/>
</dbReference>
<dbReference type="InterPro" id="IPR022450">
    <property type="entry name" value="TsaD"/>
</dbReference>
<dbReference type="NCBIfam" id="TIGR00329">
    <property type="entry name" value="gcp_kae1"/>
    <property type="match status" value="1"/>
</dbReference>
<dbReference type="NCBIfam" id="TIGR03723">
    <property type="entry name" value="T6A_TsaD_YgjD"/>
    <property type="match status" value="1"/>
</dbReference>
<dbReference type="PANTHER" id="PTHR11735">
    <property type="entry name" value="TRNA N6-ADENOSINE THREONYLCARBAMOYLTRANSFERASE"/>
    <property type="match status" value="1"/>
</dbReference>
<dbReference type="PANTHER" id="PTHR11735:SF6">
    <property type="entry name" value="TRNA N6-ADENOSINE THREONYLCARBAMOYLTRANSFERASE, MITOCHONDRIAL"/>
    <property type="match status" value="1"/>
</dbReference>
<dbReference type="Pfam" id="PF00814">
    <property type="entry name" value="TsaD"/>
    <property type="match status" value="1"/>
</dbReference>
<dbReference type="PRINTS" id="PR00789">
    <property type="entry name" value="OSIALOPTASE"/>
</dbReference>
<dbReference type="SUPFAM" id="SSF53067">
    <property type="entry name" value="Actin-like ATPase domain"/>
    <property type="match status" value="2"/>
</dbReference>
<organism>
    <name type="scientific">Ralstonia pickettii (strain 12J)</name>
    <dbReference type="NCBI Taxonomy" id="402626"/>
    <lineage>
        <taxon>Bacteria</taxon>
        <taxon>Pseudomonadati</taxon>
        <taxon>Pseudomonadota</taxon>
        <taxon>Betaproteobacteria</taxon>
        <taxon>Burkholderiales</taxon>
        <taxon>Burkholderiaceae</taxon>
        <taxon>Ralstonia</taxon>
    </lineage>
</organism>
<feature type="chain" id="PRO_1000192696" description="tRNA N6-adenosine threonylcarbamoyltransferase">
    <location>
        <begin position="1"/>
        <end position="347"/>
    </location>
</feature>
<feature type="binding site" evidence="1">
    <location>
        <position position="111"/>
    </location>
    <ligand>
        <name>Fe cation</name>
        <dbReference type="ChEBI" id="CHEBI:24875"/>
    </ligand>
</feature>
<feature type="binding site" evidence="1">
    <location>
        <position position="115"/>
    </location>
    <ligand>
        <name>Fe cation</name>
        <dbReference type="ChEBI" id="CHEBI:24875"/>
    </ligand>
</feature>
<feature type="binding site" evidence="1">
    <location>
        <begin position="134"/>
        <end position="138"/>
    </location>
    <ligand>
        <name>substrate</name>
    </ligand>
</feature>
<feature type="binding site" evidence="1">
    <location>
        <position position="167"/>
    </location>
    <ligand>
        <name>substrate</name>
    </ligand>
</feature>
<feature type="binding site" evidence="1">
    <location>
        <position position="180"/>
    </location>
    <ligand>
        <name>substrate</name>
    </ligand>
</feature>
<feature type="binding site" evidence="1">
    <location>
        <position position="277"/>
    </location>
    <ligand>
        <name>substrate</name>
    </ligand>
</feature>
<feature type="binding site" evidence="1">
    <location>
        <position position="305"/>
    </location>
    <ligand>
        <name>Fe cation</name>
        <dbReference type="ChEBI" id="CHEBI:24875"/>
    </ligand>
</feature>
<proteinExistence type="inferred from homology"/>
<keyword id="KW-0012">Acyltransferase</keyword>
<keyword id="KW-0963">Cytoplasm</keyword>
<keyword id="KW-0408">Iron</keyword>
<keyword id="KW-0479">Metal-binding</keyword>
<keyword id="KW-0808">Transferase</keyword>
<keyword id="KW-0819">tRNA processing</keyword>
<evidence type="ECO:0000255" key="1">
    <source>
        <dbReference type="HAMAP-Rule" id="MF_01445"/>
    </source>
</evidence>
<accession>B2U928</accession>
<protein>
    <recommendedName>
        <fullName evidence="1">tRNA N6-adenosine threonylcarbamoyltransferase</fullName>
        <ecNumber evidence="1">2.3.1.234</ecNumber>
    </recommendedName>
    <alternativeName>
        <fullName evidence="1">N6-L-threonylcarbamoyladenine synthase</fullName>
        <shortName evidence="1">t(6)A synthase</shortName>
    </alternativeName>
    <alternativeName>
        <fullName evidence="1">t(6)A37 threonylcarbamoyladenosine biosynthesis protein TsaD</fullName>
    </alternativeName>
    <alternativeName>
        <fullName evidence="1">tRNA threonylcarbamoyladenosine biosynthesis protein TsaD</fullName>
    </alternativeName>
</protein>
<gene>
    <name evidence="1" type="primary">tsaD</name>
    <name type="synonym">gcp</name>
    <name type="ordered locus">Rpic_2424</name>
</gene>
<reference key="1">
    <citation type="submission" date="2008-05" db="EMBL/GenBank/DDBJ databases">
        <title>Complete sequence of chromosome 1 of Ralstonia pickettii 12J.</title>
        <authorList>
            <person name="Lucas S."/>
            <person name="Copeland A."/>
            <person name="Lapidus A."/>
            <person name="Glavina del Rio T."/>
            <person name="Dalin E."/>
            <person name="Tice H."/>
            <person name="Bruce D."/>
            <person name="Goodwin L."/>
            <person name="Pitluck S."/>
            <person name="Meincke L."/>
            <person name="Brettin T."/>
            <person name="Detter J.C."/>
            <person name="Han C."/>
            <person name="Kuske C.R."/>
            <person name="Schmutz J."/>
            <person name="Larimer F."/>
            <person name="Land M."/>
            <person name="Hauser L."/>
            <person name="Kyrpides N."/>
            <person name="Mikhailova N."/>
            <person name="Marsh T."/>
            <person name="Richardson P."/>
        </authorList>
    </citation>
    <scope>NUCLEOTIDE SEQUENCE [LARGE SCALE GENOMIC DNA]</scope>
    <source>
        <strain>12J</strain>
    </source>
</reference>
<name>TSAD_RALPJ</name>
<sequence length="347" mass="37200">MLVLGIESSCDETGVALYDTHSGLRAHALYSQIAMHREYGGVVPELASRDHIRRVIPLLEEVLGKAGATRADIDAIAYTKGPGLAGALLVGASVANALAFALGKPLVAVHHLEGHLLSPLLEADRPEFPFLALLVSGGHTQLMRVDAVGQYTLLGETLDDAAGEAFDKTAKLLGLGYPGGPAVSRLAEFGNPGVFDLPRPMLHSGNFDFSFAGLKTAVLTQVRKLNLTDSETCYQPRADLARAFVDAIVEVLVKKTLRAAREHGLKRIVVAGGVGANRQLREGLNAEGKKRGLRVYYPDLQFCTDNGAMIAFAGAMRLQADPAQVQDGYGYGVTPRWDLEDIRIRHA</sequence>